<sequence length="468" mass="53310">MSNIYIQEPPTNGKVLLKTTAGDIDIELWSKEAPKACRNFIQLCLEAYYDNTIFHRVVPGFIVQGGDPTGTGTGGESVYGAPFKDEFHSRLRFNRRGLVAMANAGPHDNGSQFFFTLGRADELNNKHTIFGKVTGDTVYNMLRLTEVDIDDEERPRNPHRIKSCEVLFNPFDDIIPREIKKPKKEKAEEEIKKLKPKGTKNFSLLSFGEEAEEEEEEVNRVSQSMKGRSKSSHDLLKDDPHLSSVPAVESEKDDATGDLEDDAEDDSVEHDGSMEEDEKNLMRERIAKRLKKDASANVKSAGDGEKKPASRSEELRKEARQLKRELLAAKQKKESATKAEKGSEEEEAVPDGPVAEYRREKQKYEALRKQQPKKGTSREDQTLALLSQFKSKLTQAITEMPENCAEAEVEDDEGWMSHVLQFEDKTRKVKDASMQDSDTFEIYDPRNPVNKRRREESKKLLREKKERR</sequence>
<gene>
    <name evidence="6" type="primary">Cwc27</name>
    <name type="synonym">Sdccag10</name>
</gene>
<organism>
    <name type="scientific">Rattus norvegicus</name>
    <name type="common">Rat</name>
    <dbReference type="NCBI Taxonomy" id="10116"/>
    <lineage>
        <taxon>Eukaryota</taxon>
        <taxon>Metazoa</taxon>
        <taxon>Chordata</taxon>
        <taxon>Craniata</taxon>
        <taxon>Vertebrata</taxon>
        <taxon>Euteleostomi</taxon>
        <taxon>Mammalia</taxon>
        <taxon>Eutheria</taxon>
        <taxon>Euarchontoglires</taxon>
        <taxon>Glires</taxon>
        <taxon>Rodentia</taxon>
        <taxon>Myomorpha</taxon>
        <taxon>Muroidea</taxon>
        <taxon>Muridae</taxon>
        <taxon>Murinae</taxon>
        <taxon>Rattus</taxon>
    </lineage>
</organism>
<reference key="1">
    <citation type="journal article" date="2004" name="Genome Res.">
        <title>The status, quality, and expansion of the NIH full-length cDNA project: the Mammalian Gene Collection (MGC).</title>
        <authorList>
            <consortium name="The MGC Project Team"/>
        </authorList>
    </citation>
    <scope>NUCLEOTIDE SEQUENCE [LARGE SCALE MRNA]</scope>
    <source>
        <tissue>Heart</tissue>
    </source>
</reference>
<reference key="2">
    <citation type="journal article" date="2012" name="Nat. Commun.">
        <title>Quantitative maps of protein phosphorylation sites across 14 different rat organs and tissues.</title>
        <authorList>
            <person name="Lundby A."/>
            <person name="Secher A."/>
            <person name="Lage K."/>
            <person name="Nordsborg N.B."/>
            <person name="Dmytriyev A."/>
            <person name="Lundby C."/>
            <person name="Olsen J.V."/>
        </authorList>
    </citation>
    <scope>PHOSPHORYLATION [LARGE SCALE ANALYSIS] AT SER-273 AND SER-343</scope>
    <scope>IDENTIFICATION BY MASS SPECTROMETRY [LARGE SCALE ANALYSIS]</scope>
</reference>
<accession>Q5XIB2</accession>
<evidence type="ECO:0000250" key="1">
    <source>
        <dbReference type="UniProtKB" id="Q6UX04"/>
    </source>
</evidence>
<evidence type="ECO:0000255" key="2"/>
<evidence type="ECO:0000255" key="3">
    <source>
        <dbReference type="PROSITE-ProRule" id="PRU00156"/>
    </source>
</evidence>
<evidence type="ECO:0000256" key="4">
    <source>
        <dbReference type="SAM" id="MobiDB-lite"/>
    </source>
</evidence>
<evidence type="ECO:0000305" key="5"/>
<evidence type="ECO:0000312" key="6">
    <source>
        <dbReference type="RGD" id="1310697"/>
    </source>
</evidence>
<evidence type="ECO:0007744" key="7">
    <source>
    </source>
</evidence>
<dbReference type="EMBL" id="BC083774">
    <property type="protein sequence ID" value="AAH83774.1"/>
    <property type="molecule type" value="mRNA"/>
</dbReference>
<dbReference type="RefSeq" id="NP_001013217.1">
    <property type="nucleotide sequence ID" value="NM_001013199.1"/>
</dbReference>
<dbReference type="SMR" id="Q5XIB2"/>
<dbReference type="FunCoup" id="Q5XIB2">
    <property type="interactions" value="2585"/>
</dbReference>
<dbReference type="STRING" id="10116.ENSRNOP00000017832"/>
<dbReference type="iPTMnet" id="Q5XIB2"/>
<dbReference type="PhosphoSitePlus" id="Q5XIB2"/>
<dbReference type="jPOST" id="Q5XIB2"/>
<dbReference type="PaxDb" id="10116-ENSRNOP00000017832"/>
<dbReference type="GeneID" id="361887"/>
<dbReference type="KEGG" id="rno:361887"/>
<dbReference type="UCSC" id="RGD:1310697">
    <property type="organism name" value="rat"/>
</dbReference>
<dbReference type="AGR" id="RGD:1310697"/>
<dbReference type="CTD" id="10283"/>
<dbReference type="RGD" id="1310697">
    <property type="gene designation" value="Cwc27"/>
</dbReference>
<dbReference type="VEuPathDB" id="HostDB:ENSRNOG00000013252"/>
<dbReference type="eggNOG" id="KOG0865">
    <property type="taxonomic scope" value="Eukaryota"/>
</dbReference>
<dbReference type="eggNOG" id="KOG0885">
    <property type="taxonomic scope" value="Eukaryota"/>
</dbReference>
<dbReference type="InParanoid" id="Q5XIB2"/>
<dbReference type="OrthoDB" id="442970at2759"/>
<dbReference type="PhylomeDB" id="Q5XIB2"/>
<dbReference type="TreeFam" id="TF105935"/>
<dbReference type="PRO" id="PR:Q5XIB2"/>
<dbReference type="Proteomes" id="UP000002494">
    <property type="component" value="Chromosome 2"/>
</dbReference>
<dbReference type="Bgee" id="ENSRNOG00000013252">
    <property type="expression patterns" value="Expressed in ovary and 20 other cell types or tissues"/>
</dbReference>
<dbReference type="ExpressionAtlas" id="Q5XIB2">
    <property type="expression patterns" value="baseline and differential"/>
</dbReference>
<dbReference type="GO" id="GO:0071013">
    <property type="term" value="C:catalytic step 2 spliceosome"/>
    <property type="evidence" value="ECO:0000266"/>
    <property type="project" value="RGD"/>
</dbReference>
<dbReference type="GO" id="GO:0005634">
    <property type="term" value="C:nucleus"/>
    <property type="evidence" value="ECO:0000266"/>
    <property type="project" value="RGD"/>
</dbReference>
<dbReference type="GO" id="GO:0071005">
    <property type="term" value="C:U2-type precatalytic spliceosome"/>
    <property type="evidence" value="ECO:0000250"/>
    <property type="project" value="UniProtKB"/>
</dbReference>
<dbReference type="GO" id="GO:0006457">
    <property type="term" value="P:protein folding"/>
    <property type="evidence" value="ECO:0000318"/>
    <property type="project" value="GO_Central"/>
</dbReference>
<dbReference type="CDD" id="cd22288">
    <property type="entry name" value="CWC27_CTD"/>
    <property type="match status" value="1"/>
</dbReference>
<dbReference type="CDD" id="cd01925">
    <property type="entry name" value="cyclophilin_CeCYP16-like"/>
    <property type="match status" value="1"/>
</dbReference>
<dbReference type="FunFam" id="2.40.100.10:FF:000007">
    <property type="entry name" value="Peptidyl-prolyl cis-trans isomerase CWC27 homolog"/>
    <property type="match status" value="1"/>
</dbReference>
<dbReference type="Gene3D" id="2.40.100.10">
    <property type="entry name" value="Cyclophilin-like"/>
    <property type="match status" value="1"/>
</dbReference>
<dbReference type="InterPro" id="IPR029000">
    <property type="entry name" value="Cyclophilin-like_dom_sf"/>
</dbReference>
<dbReference type="InterPro" id="IPR020892">
    <property type="entry name" value="Cyclophilin-type_PPIase_CS"/>
</dbReference>
<dbReference type="InterPro" id="IPR002130">
    <property type="entry name" value="Cyclophilin-type_PPIase_dom"/>
</dbReference>
<dbReference type="InterPro" id="IPR044666">
    <property type="entry name" value="Cyclophilin_A-like"/>
</dbReference>
<dbReference type="PANTHER" id="PTHR45625">
    <property type="entry name" value="PEPTIDYL-PROLYL CIS-TRANS ISOMERASE-RELATED"/>
    <property type="match status" value="1"/>
</dbReference>
<dbReference type="PANTHER" id="PTHR45625:SF6">
    <property type="entry name" value="SPLICEOSOME-ASSOCIATED PROTEIN CWC27 HOMOLOG"/>
    <property type="match status" value="1"/>
</dbReference>
<dbReference type="Pfam" id="PF00160">
    <property type="entry name" value="Pro_isomerase"/>
    <property type="match status" value="1"/>
</dbReference>
<dbReference type="PRINTS" id="PR00153">
    <property type="entry name" value="CSAPPISMRASE"/>
</dbReference>
<dbReference type="SUPFAM" id="SSF50891">
    <property type="entry name" value="Cyclophilin-like"/>
    <property type="match status" value="1"/>
</dbReference>
<dbReference type="PROSITE" id="PS00170">
    <property type="entry name" value="CSA_PPIASE_1"/>
    <property type="match status" value="1"/>
</dbReference>
<dbReference type="PROSITE" id="PS50072">
    <property type="entry name" value="CSA_PPIASE_2"/>
    <property type="match status" value="1"/>
</dbReference>
<keyword id="KW-0007">Acetylation</keyword>
<keyword id="KW-0175">Coiled coil</keyword>
<keyword id="KW-0539">Nucleus</keyword>
<keyword id="KW-0597">Phosphoprotein</keyword>
<keyword id="KW-1185">Reference proteome</keyword>
<proteinExistence type="evidence at protein level"/>
<feature type="initiator methionine" description="Removed" evidence="1">
    <location>
        <position position="1"/>
    </location>
</feature>
<feature type="chain" id="PRO_0000313651" description="Spliceosome-associated protein CWC27 homolog">
    <location>
        <begin position="2"/>
        <end position="468"/>
    </location>
</feature>
<feature type="domain" description="PPIase cyclophilin-type" evidence="3">
    <location>
        <begin position="11"/>
        <end position="166"/>
    </location>
</feature>
<feature type="region of interest" description="Disordered" evidence="4">
    <location>
        <begin position="204"/>
        <end position="382"/>
    </location>
</feature>
<feature type="region of interest" description="Disordered" evidence="4">
    <location>
        <begin position="427"/>
        <end position="468"/>
    </location>
</feature>
<feature type="coiled-coil region" evidence="2">
    <location>
        <begin position="206"/>
        <end position="229"/>
    </location>
</feature>
<feature type="coiled-coil region" evidence="2">
    <location>
        <begin position="309"/>
        <end position="342"/>
    </location>
</feature>
<feature type="compositionally biased region" description="Basic and acidic residues" evidence="4">
    <location>
        <begin position="231"/>
        <end position="241"/>
    </location>
</feature>
<feature type="compositionally biased region" description="Acidic residues" evidence="4">
    <location>
        <begin position="256"/>
        <end position="268"/>
    </location>
</feature>
<feature type="compositionally biased region" description="Basic and acidic residues" evidence="4">
    <location>
        <begin position="269"/>
        <end position="287"/>
    </location>
</feature>
<feature type="compositionally biased region" description="Basic and acidic residues" evidence="4">
    <location>
        <begin position="302"/>
        <end position="342"/>
    </location>
</feature>
<feature type="compositionally biased region" description="Basic and acidic residues" evidence="4">
    <location>
        <begin position="356"/>
        <end position="368"/>
    </location>
</feature>
<feature type="compositionally biased region" description="Basic and acidic residues" evidence="4">
    <location>
        <begin position="453"/>
        <end position="468"/>
    </location>
</feature>
<feature type="modified residue" description="N-acetylserine" evidence="1">
    <location>
        <position position="2"/>
    </location>
</feature>
<feature type="modified residue" description="Phosphoserine" evidence="7">
    <location>
        <position position="273"/>
    </location>
</feature>
<feature type="modified residue" description="Phosphoserine" evidence="7">
    <location>
        <position position="343"/>
    </location>
</feature>
<name>CWC27_RAT</name>
<comment type="function">
    <text evidence="1">As part of the spliceosome, plays a role in pre-mRNA splicing. Probable inactive PPIase with no peptidyl-prolyl cis-trans isomerase activity. As a component of the minor spliceosome, involved in the splicing of U12-type introns in pre-mRNAs (By similarity).</text>
</comment>
<comment type="subunit">
    <text evidence="1">Part of the activated spliceosome B/catalytic step 1 spliceosome, one of the forms of the spliceosome which has a well-formed active site but still cannot catalyze the branching reaction and is composed at least of 52 proteins, the U2, U5 and U6 snRNAs and the pre-mRNA. Recruited during early steps of activated spliceosome B maturation, it is probably one of the first proteins released from this complex as he matures to the spliceosome C complex. Component of the minor spliceosome, which splices U12-type introns (By similarity).</text>
</comment>
<comment type="subcellular location">
    <subcellularLocation>
        <location evidence="1">Nucleus</location>
    </subcellularLocation>
</comment>
<comment type="similarity">
    <text evidence="5">Belongs to the cyclophilin-type PPIase family.</text>
</comment>
<comment type="caution">
    <text evidence="1">Despite the fact that it belongs to the cyclophilin-type PPIase family, it has probably no peptidyl-prolyl cis-trans isomerase activity.</text>
</comment>
<protein>
    <recommendedName>
        <fullName evidence="5">Spliceosome-associated protein CWC27 homolog</fullName>
    </recommendedName>
    <alternativeName>
        <fullName evidence="1">Probable inactive peptidyl-prolyl cis-trans isomerase CWC27 homolog</fullName>
        <shortName evidence="1">PPIase CWC27</shortName>
    </alternativeName>
</protein>